<reference key="1">
    <citation type="submission" date="2005-08" db="EMBL/GenBank/DDBJ databases">
        <title>Complete sequence of chromosome 1 of Synechococcus elongatus PCC 7942.</title>
        <authorList>
            <consortium name="US DOE Joint Genome Institute"/>
            <person name="Copeland A."/>
            <person name="Lucas S."/>
            <person name="Lapidus A."/>
            <person name="Barry K."/>
            <person name="Detter J.C."/>
            <person name="Glavina T."/>
            <person name="Hammon N."/>
            <person name="Israni S."/>
            <person name="Pitluck S."/>
            <person name="Schmutz J."/>
            <person name="Larimer F."/>
            <person name="Land M."/>
            <person name="Kyrpides N."/>
            <person name="Lykidis A."/>
            <person name="Golden S."/>
            <person name="Richardson P."/>
        </authorList>
    </citation>
    <scope>NUCLEOTIDE SEQUENCE [LARGE SCALE GENOMIC DNA]</scope>
    <source>
        <strain>ATCC 33912 / PCC 7942 / FACHB-805</strain>
    </source>
</reference>
<gene>
    <name evidence="1" type="primary">rpsS</name>
    <name evidence="1" type="synonym">rps19</name>
    <name type="ordered locus">Synpcc7942_2228</name>
</gene>
<evidence type="ECO:0000255" key="1">
    <source>
        <dbReference type="HAMAP-Rule" id="MF_00531"/>
    </source>
</evidence>
<evidence type="ECO:0000305" key="2"/>
<proteinExistence type="inferred from homology"/>
<sequence>MARSLKKGPFVADHLLRKVEKLNAKGDKQVIKTWSRASTILPQMIGHTIAVHNGRQHVPVYVTEQMVGHKLGEFAPTRTFRGHTKDKKAGR</sequence>
<dbReference type="EMBL" id="CP000100">
    <property type="protein sequence ID" value="ABB58258.1"/>
    <property type="molecule type" value="Genomic_DNA"/>
</dbReference>
<dbReference type="RefSeq" id="WP_011244179.1">
    <property type="nucleotide sequence ID" value="NZ_JACJTX010000001.1"/>
</dbReference>
<dbReference type="SMR" id="Q31L11"/>
<dbReference type="STRING" id="1140.Synpcc7942_2228"/>
<dbReference type="PaxDb" id="1140-Synpcc7942_2228"/>
<dbReference type="GeneID" id="72431111"/>
<dbReference type="KEGG" id="syf:Synpcc7942_2228"/>
<dbReference type="eggNOG" id="COG0185">
    <property type="taxonomic scope" value="Bacteria"/>
</dbReference>
<dbReference type="HOGENOM" id="CLU_144911_0_1_3"/>
<dbReference type="OrthoDB" id="9797833at2"/>
<dbReference type="BioCyc" id="SYNEL:SYNPCC7942_2228-MONOMER"/>
<dbReference type="Proteomes" id="UP000889800">
    <property type="component" value="Chromosome"/>
</dbReference>
<dbReference type="GO" id="GO:0005737">
    <property type="term" value="C:cytoplasm"/>
    <property type="evidence" value="ECO:0007669"/>
    <property type="project" value="UniProtKB-ARBA"/>
</dbReference>
<dbReference type="GO" id="GO:0015935">
    <property type="term" value="C:small ribosomal subunit"/>
    <property type="evidence" value="ECO:0007669"/>
    <property type="project" value="InterPro"/>
</dbReference>
<dbReference type="GO" id="GO:0019843">
    <property type="term" value="F:rRNA binding"/>
    <property type="evidence" value="ECO:0007669"/>
    <property type="project" value="UniProtKB-UniRule"/>
</dbReference>
<dbReference type="GO" id="GO:0003735">
    <property type="term" value="F:structural constituent of ribosome"/>
    <property type="evidence" value="ECO:0007669"/>
    <property type="project" value="InterPro"/>
</dbReference>
<dbReference type="GO" id="GO:0000028">
    <property type="term" value="P:ribosomal small subunit assembly"/>
    <property type="evidence" value="ECO:0007669"/>
    <property type="project" value="TreeGrafter"/>
</dbReference>
<dbReference type="GO" id="GO:0006412">
    <property type="term" value="P:translation"/>
    <property type="evidence" value="ECO:0007669"/>
    <property type="project" value="UniProtKB-UniRule"/>
</dbReference>
<dbReference type="FunFam" id="3.30.860.10:FF:000001">
    <property type="entry name" value="30S ribosomal protein S19"/>
    <property type="match status" value="1"/>
</dbReference>
<dbReference type="Gene3D" id="3.30.860.10">
    <property type="entry name" value="30s Ribosomal Protein S19, Chain A"/>
    <property type="match status" value="1"/>
</dbReference>
<dbReference type="HAMAP" id="MF_00531">
    <property type="entry name" value="Ribosomal_uS19"/>
    <property type="match status" value="1"/>
</dbReference>
<dbReference type="InterPro" id="IPR002222">
    <property type="entry name" value="Ribosomal_uS19"/>
</dbReference>
<dbReference type="InterPro" id="IPR005732">
    <property type="entry name" value="Ribosomal_uS19_bac-type"/>
</dbReference>
<dbReference type="InterPro" id="IPR020934">
    <property type="entry name" value="Ribosomal_uS19_CS"/>
</dbReference>
<dbReference type="InterPro" id="IPR023575">
    <property type="entry name" value="Ribosomal_uS19_SF"/>
</dbReference>
<dbReference type="NCBIfam" id="TIGR01050">
    <property type="entry name" value="rpsS_bact"/>
    <property type="match status" value="1"/>
</dbReference>
<dbReference type="PANTHER" id="PTHR11880">
    <property type="entry name" value="RIBOSOMAL PROTEIN S19P FAMILY MEMBER"/>
    <property type="match status" value="1"/>
</dbReference>
<dbReference type="PANTHER" id="PTHR11880:SF8">
    <property type="entry name" value="SMALL RIBOSOMAL SUBUNIT PROTEIN US19M"/>
    <property type="match status" value="1"/>
</dbReference>
<dbReference type="Pfam" id="PF00203">
    <property type="entry name" value="Ribosomal_S19"/>
    <property type="match status" value="1"/>
</dbReference>
<dbReference type="PIRSF" id="PIRSF002144">
    <property type="entry name" value="Ribosomal_S19"/>
    <property type="match status" value="1"/>
</dbReference>
<dbReference type="PRINTS" id="PR00975">
    <property type="entry name" value="RIBOSOMALS19"/>
</dbReference>
<dbReference type="SUPFAM" id="SSF54570">
    <property type="entry name" value="Ribosomal protein S19"/>
    <property type="match status" value="1"/>
</dbReference>
<dbReference type="PROSITE" id="PS00323">
    <property type="entry name" value="RIBOSOMAL_S19"/>
    <property type="match status" value="1"/>
</dbReference>
<feature type="chain" id="PRO_0000265454" description="Small ribosomal subunit protein uS19">
    <location>
        <begin position="1"/>
        <end position="91"/>
    </location>
</feature>
<organism>
    <name type="scientific">Synechococcus elongatus (strain ATCC 33912 / PCC 7942 / FACHB-805)</name>
    <name type="common">Anacystis nidulans R2</name>
    <dbReference type="NCBI Taxonomy" id="1140"/>
    <lineage>
        <taxon>Bacteria</taxon>
        <taxon>Bacillati</taxon>
        <taxon>Cyanobacteriota</taxon>
        <taxon>Cyanophyceae</taxon>
        <taxon>Synechococcales</taxon>
        <taxon>Synechococcaceae</taxon>
        <taxon>Synechococcus</taxon>
    </lineage>
</organism>
<protein>
    <recommendedName>
        <fullName evidence="1">Small ribosomal subunit protein uS19</fullName>
    </recommendedName>
    <alternativeName>
        <fullName evidence="2">30S ribosomal protein S19</fullName>
    </alternativeName>
</protein>
<accession>Q31L11</accession>
<name>RS19_SYNE7</name>
<comment type="function">
    <text evidence="1">Protein S19 forms a complex with S13 that binds strongly to the 16S ribosomal RNA.</text>
</comment>
<comment type="similarity">
    <text evidence="1">Belongs to the universal ribosomal protein uS19 family.</text>
</comment>
<keyword id="KW-1185">Reference proteome</keyword>
<keyword id="KW-0687">Ribonucleoprotein</keyword>
<keyword id="KW-0689">Ribosomal protein</keyword>
<keyword id="KW-0694">RNA-binding</keyword>
<keyword id="KW-0699">rRNA-binding</keyword>